<proteinExistence type="inferred from homology"/>
<protein>
    <recommendedName>
        <fullName evidence="1">Oxygen-dependent choline dehydrogenase</fullName>
        <shortName evidence="1">CDH</shortName>
        <shortName evidence="1">CHD</shortName>
        <ecNumber evidence="1">1.1.99.1</ecNumber>
    </recommendedName>
    <alternativeName>
        <fullName evidence="1">Betaine aldehyde dehydrogenase</fullName>
        <shortName evidence="1">BADH</shortName>
        <ecNumber evidence="1">1.2.1.8</ecNumber>
    </alternativeName>
</protein>
<gene>
    <name evidence="1" type="primary">betA</name>
    <name type="ordered locus">RHE_CH01136</name>
</gene>
<dbReference type="EC" id="1.1.99.1" evidence="1"/>
<dbReference type="EC" id="1.2.1.8" evidence="1"/>
<dbReference type="EMBL" id="CP000133">
    <property type="protein sequence ID" value="ABC89943.1"/>
    <property type="molecule type" value="Genomic_DNA"/>
</dbReference>
<dbReference type="RefSeq" id="WP_011424477.1">
    <property type="nucleotide sequence ID" value="NC_007761.1"/>
</dbReference>
<dbReference type="SMR" id="Q2KB43"/>
<dbReference type="KEGG" id="ret:RHE_CH01136"/>
<dbReference type="eggNOG" id="COG2303">
    <property type="taxonomic scope" value="Bacteria"/>
</dbReference>
<dbReference type="HOGENOM" id="CLU_002865_7_1_5"/>
<dbReference type="OrthoDB" id="9785276at2"/>
<dbReference type="UniPathway" id="UPA00529">
    <property type="reaction ID" value="UER00385"/>
</dbReference>
<dbReference type="Proteomes" id="UP000001936">
    <property type="component" value="Chromosome"/>
</dbReference>
<dbReference type="GO" id="GO:0016020">
    <property type="term" value="C:membrane"/>
    <property type="evidence" value="ECO:0007669"/>
    <property type="project" value="TreeGrafter"/>
</dbReference>
<dbReference type="GO" id="GO:0008802">
    <property type="term" value="F:betaine-aldehyde dehydrogenase (NAD+) activity"/>
    <property type="evidence" value="ECO:0007669"/>
    <property type="project" value="UniProtKB-EC"/>
</dbReference>
<dbReference type="GO" id="GO:0008812">
    <property type="term" value="F:choline dehydrogenase activity"/>
    <property type="evidence" value="ECO:0007669"/>
    <property type="project" value="UniProtKB-UniRule"/>
</dbReference>
<dbReference type="GO" id="GO:0050660">
    <property type="term" value="F:flavin adenine dinucleotide binding"/>
    <property type="evidence" value="ECO:0007669"/>
    <property type="project" value="InterPro"/>
</dbReference>
<dbReference type="GO" id="GO:0019285">
    <property type="term" value="P:glycine betaine biosynthetic process from choline"/>
    <property type="evidence" value="ECO:0007669"/>
    <property type="project" value="UniProtKB-UniRule"/>
</dbReference>
<dbReference type="Gene3D" id="3.50.50.60">
    <property type="entry name" value="FAD/NAD(P)-binding domain"/>
    <property type="match status" value="1"/>
</dbReference>
<dbReference type="Gene3D" id="3.30.560.10">
    <property type="entry name" value="Glucose Oxidase, domain 3"/>
    <property type="match status" value="1"/>
</dbReference>
<dbReference type="HAMAP" id="MF_00750">
    <property type="entry name" value="Choline_dehydrogen"/>
    <property type="match status" value="1"/>
</dbReference>
<dbReference type="InterPro" id="IPR011533">
    <property type="entry name" value="BetA"/>
</dbReference>
<dbReference type="InterPro" id="IPR036188">
    <property type="entry name" value="FAD/NAD-bd_sf"/>
</dbReference>
<dbReference type="InterPro" id="IPR012132">
    <property type="entry name" value="GMC_OxRdtase"/>
</dbReference>
<dbReference type="InterPro" id="IPR000172">
    <property type="entry name" value="GMC_OxRdtase_N"/>
</dbReference>
<dbReference type="InterPro" id="IPR007867">
    <property type="entry name" value="GMC_OxRtase_C"/>
</dbReference>
<dbReference type="NCBIfam" id="TIGR01810">
    <property type="entry name" value="betA"/>
    <property type="match status" value="1"/>
</dbReference>
<dbReference type="NCBIfam" id="NF002550">
    <property type="entry name" value="PRK02106.1"/>
    <property type="match status" value="1"/>
</dbReference>
<dbReference type="PANTHER" id="PTHR11552:SF147">
    <property type="entry name" value="CHOLINE DEHYDROGENASE, MITOCHONDRIAL"/>
    <property type="match status" value="1"/>
</dbReference>
<dbReference type="PANTHER" id="PTHR11552">
    <property type="entry name" value="GLUCOSE-METHANOL-CHOLINE GMC OXIDOREDUCTASE"/>
    <property type="match status" value="1"/>
</dbReference>
<dbReference type="Pfam" id="PF05199">
    <property type="entry name" value="GMC_oxred_C"/>
    <property type="match status" value="1"/>
</dbReference>
<dbReference type="Pfam" id="PF00732">
    <property type="entry name" value="GMC_oxred_N"/>
    <property type="match status" value="1"/>
</dbReference>
<dbReference type="PIRSF" id="PIRSF000137">
    <property type="entry name" value="Alcohol_oxidase"/>
    <property type="match status" value="1"/>
</dbReference>
<dbReference type="SUPFAM" id="SSF54373">
    <property type="entry name" value="FAD-linked reductases, C-terminal domain"/>
    <property type="match status" value="1"/>
</dbReference>
<dbReference type="SUPFAM" id="SSF51905">
    <property type="entry name" value="FAD/NAD(P)-binding domain"/>
    <property type="match status" value="1"/>
</dbReference>
<dbReference type="PROSITE" id="PS00623">
    <property type="entry name" value="GMC_OXRED_1"/>
    <property type="match status" value="1"/>
</dbReference>
<dbReference type="PROSITE" id="PS00624">
    <property type="entry name" value="GMC_OXRED_2"/>
    <property type="match status" value="1"/>
</dbReference>
<accession>Q2KB43</accession>
<comment type="function">
    <text evidence="1">Involved in the biosynthesis of the osmoprotectant glycine betaine. Catalyzes the oxidation of choline to betaine aldehyde and betaine aldehyde to glycine betaine at the same rate.</text>
</comment>
<comment type="catalytic activity">
    <reaction evidence="1">
        <text>choline + A = betaine aldehyde + AH2</text>
        <dbReference type="Rhea" id="RHEA:17433"/>
        <dbReference type="ChEBI" id="CHEBI:13193"/>
        <dbReference type="ChEBI" id="CHEBI:15354"/>
        <dbReference type="ChEBI" id="CHEBI:15710"/>
        <dbReference type="ChEBI" id="CHEBI:17499"/>
        <dbReference type="EC" id="1.1.99.1"/>
    </reaction>
</comment>
<comment type="catalytic activity">
    <reaction evidence="1">
        <text>betaine aldehyde + NAD(+) + H2O = glycine betaine + NADH + 2 H(+)</text>
        <dbReference type="Rhea" id="RHEA:15305"/>
        <dbReference type="ChEBI" id="CHEBI:15377"/>
        <dbReference type="ChEBI" id="CHEBI:15378"/>
        <dbReference type="ChEBI" id="CHEBI:15710"/>
        <dbReference type="ChEBI" id="CHEBI:17750"/>
        <dbReference type="ChEBI" id="CHEBI:57540"/>
        <dbReference type="ChEBI" id="CHEBI:57945"/>
        <dbReference type="EC" id="1.2.1.8"/>
    </reaction>
</comment>
<comment type="cofactor">
    <cofactor evidence="1">
        <name>FAD</name>
        <dbReference type="ChEBI" id="CHEBI:57692"/>
    </cofactor>
</comment>
<comment type="pathway">
    <text evidence="1">Amine and polyamine biosynthesis; betaine biosynthesis via choline pathway; betaine aldehyde from choline (cytochrome c reductase route): step 1/1.</text>
</comment>
<comment type="similarity">
    <text evidence="1">Belongs to the GMC oxidoreductase family.</text>
</comment>
<organism>
    <name type="scientific">Rhizobium etli (strain ATCC 51251 / DSM 11541 / JCM 21823 / NBRC 15573 / CFN 42)</name>
    <dbReference type="NCBI Taxonomy" id="347834"/>
    <lineage>
        <taxon>Bacteria</taxon>
        <taxon>Pseudomonadati</taxon>
        <taxon>Pseudomonadota</taxon>
        <taxon>Alphaproteobacteria</taxon>
        <taxon>Hyphomicrobiales</taxon>
        <taxon>Rhizobiaceae</taxon>
        <taxon>Rhizobium/Agrobacterium group</taxon>
        <taxon>Rhizobium</taxon>
    </lineage>
</organism>
<name>BETA_RHIEC</name>
<evidence type="ECO:0000255" key="1">
    <source>
        <dbReference type="HAMAP-Rule" id="MF_00750"/>
    </source>
</evidence>
<evidence type="ECO:0000256" key="2">
    <source>
        <dbReference type="SAM" id="MobiDB-lite"/>
    </source>
</evidence>
<feature type="chain" id="PRO_0000258932" description="Oxygen-dependent choline dehydrogenase">
    <location>
        <begin position="1"/>
        <end position="549"/>
    </location>
</feature>
<feature type="region of interest" description="Disordered" evidence="2">
    <location>
        <begin position="530"/>
        <end position="549"/>
    </location>
</feature>
<feature type="active site" description="Proton acceptor" evidence="1">
    <location>
        <position position="465"/>
    </location>
</feature>
<feature type="binding site" evidence="1">
    <location>
        <begin position="4"/>
        <end position="33"/>
    </location>
    <ligand>
        <name>FAD</name>
        <dbReference type="ChEBI" id="CHEBI:57692"/>
    </ligand>
</feature>
<sequence>MQADFVIIGSGSAGSALAYRLSEDGKNSVLVIEAGGSDFGPFIQMPAALAWPMSMKRYNWGYLSEPEPNLNNRRITAPRGKVIGGSSSINGMVYVRGHAEDFNRWEELGASGWAYADVLPYFKRMEHSHGGEEGWRGTDGPLHVQRGGFTNPLFRAFIEAGKQAGFETTEDYNGSKQEGFGLMEQTIFAGRRWSAANAYLKPALKRDNVGIVYGLARRIVIENGRATGVEIERGGRTEVVKANREVIVSASSFNSPKLLMLSGIGPAKHLKEMGIEVKADRPGVGANLQDHMEFYFQQVSTKPVSLYSWLPWFWQGVAGAQWLLSKGGLGASNQFEACAFLRSAPGLKQPDIQYHFLPVAISYDGKAAAKSHGFQVHVGYNLSKSRGSVTLRSPDPKADPVLRFNYMSHPEDWEKFRHCVRLTREIFGQKAFDAYRGPEIQPGEGVQSDEQIDSFLREHLESAYHPCGTCKMGAKDDPMAVVDPQTRVIGVDGLRVADSSIFPHVTYGNLNGPSIMTGEKAADHILGKQPLARSNQEPWINPRAAVSDR</sequence>
<reference key="1">
    <citation type="journal article" date="2006" name="Proc. Natl. Acad. Sci. U.S.A.">
        <title>The partitioned Rhizobium etli genome: genetic and metabolic redundancy in seven interacting replicons.</title>
        <authorList>
            <person name="Gonzalez V."/>
            <person name="Santamaria R.I."/>
            <person name="Bustos P."/>
            <person name="Hernandez-Gonzalez I."/>
            <person name="Medrano-Soto A."/>
            <person name="Moreno-Hagelsieb G."/>
            <person name="Janga S.C."/>
            <person name="Ramirez M.A."/>
            <person name="Jimenez-Jacinto V."/>
            <person name="Collado-Vides J."/>
            <person name="Davila G."/>
        </authorList>
    </citation>
    <scope>NUCLEOTIDE SEQUENCE [LARGE SCALE GENOMIC DNA]</scope>
    <source>
        <strain>ATCC 51251 / DSM 11541 / JCM 21823 / NBRC 15573 / CFN 42</strain>
    </source>
</reference>
<keyword id="KW-0274">FAD</keyword>
<keyword id="KW-0285">Flavoprotein</keyword>
<keyword id="KW-0520">NAD</keyword>
<keyword id="KW-0560">Oxidoreductase</keyword>
<keyword id="KW-1185">Reference proteome</keyword>